<organism>
    <name type="scientific">Escherichia fergusonii (strain ATCC 35469 / DSM 13698 / CCUG 18766 / IAM 14443 / JCM 21226 / LMG 7866 / NBRC 102419 / NCTC 12128 / CDC 0568-73)</name>
    <dbReference type="NCBI Taxonomy" id="585054"/>
    <lineage>
        <taxon>Bacteria</taxon>
        <taxon>Pseudomonadati</taxon>
        <taxon>Pseudomonadota</taxon>
        <taxon>Gammaproteobacteria</taxon>
        <taxon>Enterobacterales</taxon>
        <taxon>Enterobacteriaceae</taxon>
        <taxon>Escherichia</taxon>
    </lineage>
</organism>
<proteinExistence type="inferred from homology"/>
<keyword id="KW-0028">Amino-acid biosynthesis</keyword>
<keyword id="KW-0997">Cell inner membrane</keyword>
<keyword id="KW-1003">Cell membrane</keyword>
<keyword id="KW-0198">Cysteine biosynthesis</keyword>
<keyword id="KW-0472">Membrane</keyword>
<keyword id="KW-0764">Sulfate transport</keyword>
<keyword id="KW-0812">Transmembrane</keyword>
<keyword id="KW-1133">Transmembrane helix</keyword>
<keyword id="KW-0813">Transport</keyword>
<feature type="chain" id="PRO_1000125500" description="Sulfate transporter CysZ">
    <location>
        <begin position="1"/>
        <end position="253"/>
    </location>
</feature>
<feature type="transmembrane region" description="Helical" evidence="1">
    <location>
        <begin position="31"/>
        <end position="51"/>
    </location>
</feature>
<feature type="transmembrane region" description="Helical" evidence="1">
    <location>
        <begin position="72"/>
        <end position="92"/>
    </location>
</feature>
<feature type="transmembrane region" description="Helical" evidence="1">
    <location>
        <begin position="151"/>
        <end position="171"/>
    </location>
</feature>
<feature type="transmembrane region" description="Helical" evidence="1">
    <location>
        <begin position="222"/>
        <end position="242"/>
    </location>
</feature>
<evidence type="ECO:0000255" key="1">
    <source>
        <dbReference type="HAMAP-Rule" id="MF_00468"/>
    </source>
</evidence>
<dbReference type="EMBL" id="CU928158">
    <property type="protein sequence ID" value="CAQ88299.1"/>
    <property type="molecule type" value="Genomic_DNA"/>
</dbReference>
<dbReference type="RefSeq" id="WP_000625919.1">
    <property type="nucleotide sequence ID" value="NC_011740.1"/>
</dbReference>
<dbReference type="SMR" id="B7LL71"/>
<dbReference type="GeneID" id="75058184"/>
<dbReference type="KEGG" id="efe:EFER_0761"/>
<dbReference type="HOGENOM" id="CLU_070331_1_0_6"/>
<dbReference type="OrthoDB" id="5292355at2"/>
<dbReference type="Proteomes" id="UP000000745">
    <property type="component" value="Chromosome"/>
</dbReference>
<dbReference type="GO" id="GO:0005886">
    <property type="term" value="C:plasma membrane"/>
    <property type="evidence" value="ECO:0007669"/>
    <property type="project" value="UniProtKB-SubCell"/>
</dbReference>
<dbReference type="GO" id="GO:0009675">
    <property type="term" value="F:high-affinity sulfate:proton symporter activity"/>
    <property type="evidence" value="ECO:0007669"/>
    <property type="project" value="TreeGrafter"/>
</dbReference>
<dbReference type="GO" id="GO:0019344">
    <property type="term" value="P:cysteine biosynthetic process"/>
    <property type="evidence" value="ECO:0007669"/>
    <property type="project" value="UniProtKB-UniRule"/>
</dbReference>
<dbReference type="GO" id="GO:0000103">
    <property type="term" value="P:sulfate assimilation"/>
    <property type="evidence" value="ECO:0007669"/>
    <property type="project" value="InterPro"/>
</dbReference>
<dbReference type="HAMAP" id="MF_00468">
    <property type="entry name" value="CysZ"/>
    <property type="match status" value="1"/>
</dbReference>
<dbReference type="InterPro" id="IPR050480">
    <property type="entry name" value="CysZ_sulfate_transptr"/>
</dbReference>
<dbReference type="InterPro" id="IPR022985">
    <property type="entry name" value="Sulfate_CysZ"/>
</dbReference>
<dbReference type="NCBIfam" id="NF003433">
    <property type="entry name" value="PRK04949.1"/>
    <property type="match status" value="1"/>
</dbReference>
<dbReference type="PANTHER" id="PTHR37468">
    <property type="entry name" value="SULFATE TRANSPORTER CYSZ"/>
    <property type="match status" value="1"/>
</dbReference>
<dbReference type="PANTHER" id="PTHR37468:SF1">
    <property type="entry name" value="SULFATE TRANSPORTER CYSZ"/>
    <property type="match status" value="1"/>
</dbReference>
<dbReference type="Pfam" id="PF07264">
    <property type="entry name" value="EI24"/>
    <property type="match status" value="1"/>
</dbReference>
<gene>
    <name evidence="1" type="primary">cysZ</name>
    <name type="ordered locus">EFER_0761</name>
</gene>
<accession>B7LL71</accession>
<sequence length="253" mass="29222">MISSSANVPRSGFYYFSQGWKLVSQPGIRRFVILPLLVNILLMGGAFWWLFTQLDTWIPALMSYVPEWLQWLSYILWPLAVISVLLIFGYFFSTLANWIAAPFNGLLAEQLEARLTGATPPDTGIFGIMKDLPRIMKREWQKLAWYLPRAIVLLILYFIPGVGQTVAPVLWFLFSAWMLAIQYCDYPFDNHKVPFKEMRMALRTRKVTNMQFGALTSLFTMIPVLNLFIMPVAVCGATAMWVDCYRDKHALWK</sequence>
<reference key="1">
    <citation type="journal article" date="2009" name="PLoS Genet.">
        <title>Organised genome dynamics in the Escherichia coli species results in highly diverse adaptive paths.</title>
        <authorList>
            <person name="Touchon M."/>
            <person name="Hoede C."/>
            <person name="Tenaillon O."/>
            <person name="Barbe V."/>
            <person name="Baeriswyl S."/>
            <person name="Bidet P."/>
            <person name="Bingen E."/>
            <person name="Bonacorsi S."/>
            <person name="Bouchier C."/>
            <person name="Bouvet O."/>
            <person name="Calteau A."/>
            <person name="Chiapello H."/>
            <person name="Clermont O."/>
            <person name="Cruveiller S."/>
            <person name="Danchin A."/>
            <person name="Diard M."/>
            <person name="Dossat C."/>
            <person name="Karoui M.E."/>
            <person name="Frapy E."/>
            <person name="Garry L."/>
            <person name="Ghigo J.M."/>
            <person name="Gilles A.M."/>
            <person name="Johnson J."/>
            <person name="Le Bouguenec C."/>
            <person name="Lescat M."/>
            <person name="Mangenot S."/>
            <person name="Martinez-Jehanne V."/>
            <person name="Matic I."/>
            <person name="Nassif X."/>
            <person name="Oztas S."/>
            <person name="Petit M.A."/>
            <person name="Pichon C."/>
            <person name="Rouy Z."/>
            <person name="Ruf C.S."/>
            <person name="Schneider D."/>
            <person name="Tourret J."/>
            <person name="Vacherie B."/>
            <person name="Vallenet D."/>
            <person name="Medigue C."/>
            <person name="Rocha E.P.C."/>
            <person name="Denamur E."/>
        </authorList>
    </citation>
    <scope>NUCLEOTIDE SEQUENCE [LARGE SCALE GENOMIC DNA]</scope>
    <source>
        <strain>ATCC 35469 / DSM 13698 / BCRC 15582 / CCUG 18766 / IAM 14443 / JCM 21226 / LMG 7866 / NBRC 102419 / NCTC 12128 / CDC 0568-73</strain>
    </source>
</reference>
<name>CYSZ_ESCF3</name>
<comment type="function">
    <text evidence="1">High affinity, high specificity proton-dependent sulfate transporter, which mediates sulfate uptake. Provides the sulfur source for the cysteine synthesis pathway.</text>
</comment>
<comment type="subcellular location">
    <subcellularLocation>
        <location evidence="1">Cell inner membrane</location>
        <topology evidence="1">Multi-pass membrane protein</topology>
    </subcellularLocation>
</comment>
<comment type="similarity">
    <text evidence="1">Belongs to the CysZ family.</text>
</comment>
<protein>
    <recommendedName>
        <fullName evidence="1">Sulfate transporter CysZ</fullName>
    </recommendedName>
</protein>